<keyword id="KW-0249">Electron transport</keyword>
<keyword id="KW-0349">Heme</keyword>
<keyword id="KW-0408">Iron</keyword>
<keyword id="KW-0472">Membrane</keyword>
<keyword id="KW-0479">Metal-binding</keyword>
<keyword id="KW-0496">Mitochondrion</keyword>
<keyword id="KW-0999">Mitochondrion inner membrane</keyword>
<keyword id="KW-0679">Respiratory chain</keyword>
<keyword id="KW-0812">Transmembrane</keyword>
<keyword id="KW-1133">Transmembrane helix</keyword>
<keyword id="KW-0813">Transport</keyword>
<keyword id="KW-0830">Ubiquinone</keyword>
<dbReference type="EMBL" id="D50844">
    <property type="protein sequence ID" value="BAA25009.1"/>
    <property type="molecule type" value="Genomic_DNA"/>
</dbReference>
<dbReference type="EMBL" id="D50846">
    <property type="protein sequence ID" value="BAA25010.1"/>
    <property type="molecule type" value="Genomic_DNA"/>
</dbReference>
<dbReference type="EMBL" id="AB002412">
    <property type="protein sequence ID" value="BAA25017.1"/>
    <property type="molecule type" value="Genomic_DNA"/>
</dbReference>
<dbReference type="EMBL" id="D83048">
    <property type="protein sequence ID" value="BAA20278.1"/>
    <property type="molecule type" value="Genomic_DNA"/>
</dbReference>
<dbReference type="EMBL" id="U23740">
    <property type="protein sequence ID" value="AAA73783.1"/>
    <property type="molecule type" value="Genomic_DNA"/>
</dbReference>
<dbReference type="SMR" id="O47885"/>
<dbReference type="GO" id="GO:0005743">
    <property type="term" value="C:mitochondrial inner membrane"/>
    <property type="evidence" value="ECO:0007669"/>
    <property type="project" value="UniProtKB-SubCell"/>
</dbReference>
<dbReference type="GO" id="GO:0045275">
    <property type="term" value="C:respiratory chain complex III"/>
    <property type="evidence" value="ECO:0007669"/>
    <property type="project" value="InterPro"/>
</dbReference>
<dbReference type="GO" id="GO:0046872">
    <property type="term" value="F:metal ion binding"/>
    <property type="evidence" value="ECO:0007669"/>
    <property type="project" value="UniProtKB-KW"/>
</dbReference>
<dbReference type="GO" id="GO:0008121">
    <property type="term" value="F:ubiquinol-cytochrome-c reductase activity"/>
    <property type="evidence" value="ECO:0007669"/>
    <property type="project" value="InterPro"/>
</dbReference>
<dbReference type="GO" id="GO:0006122">
    <property type="term" value="P:mitochondrial electron transport, ubiquinol to cytochrome c"/>
    <property type="evidence" value="ECO:0007669"/>
    <property type="project" value="TreeGrafter"/>
</dbReference>
<dbReference type="CDD" id="cd00290">
    <property type="entry name" value="cytochrome_b_C"/>
    <property type="match status" value="1"/>
</dbReference>
<dbReference type="CDD" id="cd00284">
    <property type="entry name" value="Cytochrome_b_N"/>
    <property type="match status" value="1"/>
</dbReference>
<dbReference type="FunFam" id="1.20.810.10:FF:000002">
    <property type="entry name" value="Cytochrome b"/>
    <property type="match status" value="1"/>
</dbReference>
<dbReference type="Gene3D" id="1.20.810.10">
    <property type="entry name" value="Cytochrome Bc1 Complex, Chain C"/>
    <property type="match status" value="1"/>
</dbReference>
<dbReference type="InterPro" id="IPR005798">
    <property type="entry name" value="Cyt_b/b6_C"/>
</dbReference>
<dbReference type="InterPro" id="IPR036150">
    <property type="entry name" value="Cyt_b/b6_C_sf"/>
</dbReference>
<dbReference type="InterPro" id="IPR005797">
    <property type="entry name" value="Cyt_b/b6_N"/>
</dbReference>
<dbReference type="InterPro" id="IPR027387">
    <property type="entry name" value="Cytb/b6-like_sf"/>
</dbReference>
<dbReference type="InterPro" id="IPR030689">
    <property type="entry name" value="Cytochrome_b"/>
</dbReference>
<dbReference type="InterPro" id="IPR048260">
    <property type="entry name" value="Cytochrome_b_C_euk/bac"/>
</dbReference>
<dbReference type="InterPro" id="IPR048259">
    <property type="entry name" value="Cytochrome_b_N_euk/bac"/>
</dbReference>
<dbReference type="InterPro" id="IPR016174">
    <property type="entry name" value="Di-haem_cyt_TM"/>
</dbReference>
<dbReference type="PANTHER" id="PTHR19271">
    <property type="entry name" value="CYTOCHROME B"/>
    <property type="match status" value="1"/>
</dbReference>
<dbReference type="PANTHER" id="PTHR19271:SF16">
    <property type="entry name" value="CYTOCHROME B"/>
    <property type="match status" value="1"/>
</dbReference>
<dbReference type="Pfam" id="PF00032">
    <property type="entry name" value="Cytochrom_B_C"/>
    <property type="match status" value="1"/>
</dbReference>
<dbReference type="Pfam" id="PF00033">
    <property type="entry name" value="Cytochrome_B"/>
    <property type="match status" value="1"/>
</dbReference>
<dbReference type="PIRSF" id="PIRSF038885">
    <property type="entry name" value="COB"/>
    <property type="match status" value="1"/>
</dbReference>
<dbReference type="SUPFAM" id="SSF81648">
    <property type="entry name" value="a domain/subunit of cytochrome bc1 complex (Ubiquinol-cytochrome c reductase)"/>
    <property type="match status" value="1"/>
</dbReference>
<dbReference type="SUPFAM" id="SSF81342">
    <property type="entry name" value="Transmembrane di-heme cytochromes"/>
    <property type="match status" value="1"/>
</dbReference>
<dbReference type="PROSITE" id="PS51003">
    <property type="entry name" value="CYTB_CTER"/>
    <property type="match status" value="1"/>
</dbReference>
<dbReference type="PROSITE" id="PS51002">
    <property type="entry name" value="CYTB_NTER"/>
    <property type="match status" value="1"/>
</dbReference>
<accession>O47885</accession>
<accession>O47886</accession>
<accession>Q34481</accession>
<gene>
    <name type="primary">MT-CYB</name>
    <name type="synonym">COB</name>
    <name type="synonym">CYTB</name>
    <name type="synonym">MTCYB</name>
</gene>
<protein>
    <recommendedName>
        <fullName>Cytochrome b</fullName>
    </recommendedName>
    <alternativeName>
        <fullName>Complex III subunit 3</fullName>
    </alternativeName>
    <alternativeName>
        <fullName>Complex III subunit III</fullName>
    </alternativeName>
    <alternativeName>
        <fullName>Cytochrome b-c1 complex subunit 3</fullName>
    </alternativeName>
    <alternativeName>
        <fullName>Ubiquinol-cytochrome-c reductase complex cytochrome b subunit</fullName>
    </alternativeName>
</protein>
<name>CYB_ELEMA</name>
<evidence type="ECO:0000250" key="1"/>
<evidence type="ECO:0000250" key="2">
    <source>
        <dbReference type="UniProtKB" id="P00157"/>
    </source>
</evidence>
<evidence type="ECO:0000255" key="3">
    <source>
        <dbReference type="PROSITE-ProRule" id="PRU00967"/>
    </source>
</evidence>
<evidence type="ECO:0000255" key="4">
    <source>
        <dbReference type="PROSITE-ProRule" id="PRU00968"/>
    </source>
</evidence>
<geneLocation type="mitochondrion"/>
<sequence length="378" mass="42882">MTHTRKFHPLFKIINKSFIDLPTPSNISTWWNFGSLLGACLITQILTGLFLAMHYTPDTMTAFSSMSHICRDVNYGWIIRQLHSNGASIFFLCLYTHIGRNIYYGSYLYSETWNTGIMLLLITMATAFMGYVLPWGQMSFWGATVITNLFSAIPYIGTNLVEWIWGGFSVDKATLNRFFAFHFILPFTMVALAGVHLTFLHETGSNNPLGLTSDSDKIPFHPYYTIKDFLGLLILILLLLLLALLSPDMLGDPDNYMPADPLNTPLHIKPEWYFLFAYAILRSVPNKLGGVLALFLSILILGLMPLLHTSKHRSMMLRPLSQVLFWTLTMDLLTLTWIGSQPVEHPYIIIGQMASILYFSIILAFLPIAGMIENYLIK</sequence>
<feature type="chain" id="PRO_0000060911" description="Cytochrome b">
    <location>
        <begin position="1"/>
        <end position="378"/>
    </location>
</feature>
<feature type="transmembrane region" description="Helical" evidence="2">
    <location>
        <begin position="33"/>
        <end position="53"/>
    </location>
</feature>
<feature type="transmembrane region" description="Helical" evidence="2">
    <location>
        <begin position="77"/>
        <end position="98"/>
    </location>
</feature>
<feature type="transmembrane region" description="Helical" evidence="2">
    <location>
        <begin position="113"/>
        <end position="133"/>
    </location>
</feature>
<feature type="transmembrane region" description="Helical" evidence="2">
    <location>
        <begin position="178"/>
        <end position="198"/>
    </location>
</feature>
<feature type="transmembrane region" description="Helical" evidence="2">
    <location>
        <begin position="226"/>
        <end position="246"/>
    </location>
</feature>
<feature type="transmembrane region" description="Helical" evidence="2">
    <location>
        <begin position="288"/>
        <end position="308"/>
    </location>
</feature>
<feature type="transmembrane region" description="Helical" evidence="2">
    <location>
        <begin position="320"/>
        <end position="340"/>
    </location>
</feature>
<feature type="transmembrane region" description="Helical" evidence="2">
    <location>
        <begin position="347"/>
        <end position="367"/>
    </location>
</feature>
<feature type="binding site" description="axial binding residue" evidence="2">
    <location>
        <position position="83"/>
    </location>
    <ligand>
        <name>heme b</name>
        <dbReference type="ChEBI" id="CHEBI:60344"/>
        <label>b562</label>
    </ligand>
    <ligandPart>
        <name>Fe</name>
        <dbReference type="ChEBI" id="CHEBI:18248"/>
    </ligandPart>
</feature>
<feature type="binding site" description="axial binding residue" evidence="2">
    <location>
        <position position="97"/>
    </location>
    <ligand>
        <name>heme b</name>
        <dbReference type="ChEBI" id="CHEBI:60344"/>
        <label>b566</label>
    </ligand>
    <ligandPart>
        <name>Fe</name>
        <dbReference type="ChEBI" id="CHEBI:18248"/>
    </ligandPart>
</feature>
<feature type="binding site" description="axial binding residue" evidence="2">
    <location>
        <position position="182"/>
    </location>
    <ligand>
        <name>heme b</name>
        <dbReference type="ChEBI" id="CHEBI:60344"/>
        <label>b562</label>
    </ligand>
    <ligandPart>
        <name>Fe</name>
        <dbReference type="ChEBI" id="CHEBI:18248"/>
    </ligandPart>
</feature>
<feature type="binding site" description="axial binding residue" evidence="2">
    <location>
        <position position="196"/>
    </location>
    <ligand>
        <name>heme b</name>
        <dbReference type="ChEBI" id="CHEBI:60344"/>
        <label>b566</label>
    </ligand>
    <ligandPart>
        <name>Fe</name>
        <dbReference type="ChEBI" id="CHEBI:18248"/>
    </ligandPart>
</feature>
<feature type="binding site" evidence="2">
    <location>
        <position position="201"/>
    </location>
    <ligand>
        <name>a ubiquinone</name>
        <dbReference type="ChEBI" id="CHEBI:16389"/>
    </ligand>
</feature>
<feature type="sequence variant">
    <original>F</original>
    <variation>S</variation>
    <location>
        <position position="7"/>
    </location>
</feature>
<feature type="sequence variant">
    <original>L</original>
    <variation>F</variation>
    <location>
        <position position="306"/>
    </location>
</feature>
<feature type="sequence variant">
    <original>H</original>
    <variation>Y</variation>
    <location>
        <position position="345"/>
    </location>
</feature>
<feature type="sequence variant">
    <original>I</original>
    <variation>T</variation>
    <location>
        <position position="348"/>
    </location>
</feature>
<comment type="function">
    <text evidence="2">Component of the ubiquinol-cytochrome c reductase complex (complex III or cytochrome b-c1 complex) that is part of the mitochondrial respiratory chain. The b-c1 complex mediates electron transfer from ubiquinol to cytochrome c. Contributes to the generation of a proton gradient across the mitochondrial membrane that is then used for ATP synthesis.</text>
</comment>
<comment type="cofactor">
    <cofactor evidence="2">
        <name>heme b</name>
        <dbReference type="ChEBI" id="CHEBI:60344"/>
    </cofactor>
    <text evidence="2">Binds 2 heme b groups non-covalently.</text>
</comment>
<comment type="subunit">
    <text evidence="2">The cytochrome bc1 complex contains 11 subunits: 3 respiratory subunits (MT-CYB, CYC1 and UQCRFS1), 2 core proteins (UQCRC1 and UQCRC2) and 6 low-molecular weight proteins (UQCRH/QCR6, UQCRB/QCR7, UQCRQ/QCR8, UQCR10/QCR9, UQCR11/QCR10 and a cleavage product of UQCRFS1). This cytochrome bc1 complex then forms a dimer.</text>
</comment>
<comment type="subcellular location">
    <subcellularLocation>
        <location evidence="2">Mitochondrion inner membrane</location>
        <topology evidence="2">Multi-pass membrane protein</topology>
    </subcellularLocation>
</comment>
<comment type="miscellaneous">
    <text evidence="1">Heme 1 (or BL or b562) is low-potential and absorbs at about 562 nm, and heme 2 (or BH or b566) is high-potential and absorbs at about 566 nm.</text>
</comment>
<comment type="similarity">
    <text evidence="3 4">Belongs to the cytochrome b family.</text>
</comment>
<comment type="caution">
    <text evidence="2">The full-length protein contains only eight transmembrane helices, not nine as predicted by bioinformatics tools.</text>
</comment>
<proteinExistence type="inferred from homology"/>
<organism>
    <name type="scientific">Elephas maximus</name>
    <name type="common">Indian elephant</name>
    <dbReference type="NCBI Taxonomy" id="9783"/>
    <lineage>
        <taxon>Eukaryota</taxon>
        <taxon>Metazoa</taxon>
        <taxon>Chordata</taxon>
        <taxon>Craniata</taxon>
        <taxon>Vertebrata</taxon>
        <taxon>Euteleostomi</taxon>
        <taxon>Mammalia</taxon>
        <taxon>Eutheria</taxon>
        <taxon>Afrotheria</taxon>
        <taxon>Proboscidea</taxon>
        <taxon>Elephantidae</taxon>
        <taxon>Elephas</taxon>
    </lineage>
</organism>
<reference key="1">
    <citation type="journal article" date="1998" name="J. Mol. Evol.">
        <title>Molecular phylogenetic inference of the woolly mammoth Mammuthus primigenius, based on complete sequences of mitochondrial cytochrome b and 12S ribosomal RNA genes.</title>
        <authorList>
            <person name="Noro M."/>
            <person name="Masuda R."/>
            <person name="Dubrovo I.A."/>
            <person name="Yoshida M.C."/>
            <person name="Kato M."/>
        </authorList>
    </citation>
    <scope>NUCLEOTIDE SEQUENCE [GENOMIC DNA]</scope>
    <source>
        <tissue>Hair</tissue>
        <tissue>Muscle</tissue>
    </source>
</reference>
<reference key="2">
    <citation type="journal article" date="1997" name="J. Mol. Evol.">
        <title>Phylogenetic position of mammoth and Steller's sea cow within Tethytheria demonstrated by mitochondrial DNA sequences.</title>
        <authorList>
            <person name="Ozawa T."/>
            <person name="Hayashi S."/>
            <person name="Mikhelson V.M."/>
        </authorList>
    </citation>
    <scope>NUCLEOTIDE SEQUENCE [GENOMIC DNA] OF 1-335</scope>
    <source>
        <tissue>Blood</tissue>
    </source>
</reference>
<reference key="3">
    <citation type="journal article" date="1996" name="Proc. Natl. Acad. Sci. U.S.A.">
        <title>Phylogenetic resolution within the Elephantidae using fossil DNA sequence from the American mastodon (Mammut americanum) as an outgroup.</title>
        <authorList>
            <person name="Yang H."/>
            <person name="Golenberg E.M."/>
            <person name="Shoshani J."/>
        </authorList>
    </citation>
    <scope>NUCLEOTIDE SEQUENCE [GENOMIC DNA] OF 32-106</scope>
</reference>